<evidence type="ECO:0000250" key="1">
    <source>
        <dbReference type="UniProtKB" id="P34405"/>
    </source>
</evidence>
<evidence type="ECO:0000255" key="2"/>
<evidence type="ECO:0000269" key="3">
    <source>
    </source>
</evidence>
<evidence type="ECO:0000303" key="4">
    <source>
    </source>
</evidence>
<evidence type="ECO:0000305" key="5"/>
<evidence type="ECO:0000305" key="6">
    <source>
    </source>
</evidence>
<accession>B3A0C6</accession>
<reference evidence="5" key="1">
    <citation type="journal article" date="2012" name="Syst. Biol.">
        <title>Peptidomics-based phylogeny and biogeography of Mantophasmatodea (Hexapoda).</title>
        <authorList>
            <person name="Predel R."/>
            <person name="Neupert S."/>
            <person name="Huetteroth W."/>
            <person name="Kahnt J."/>
            <person name="Waidelich D."/>
            <person name="Roth S."/>
        </authorList>
    </citation>
    <scope>PROTEIN SEQUENCE</scope>
    <scope>AMIDATION AT LEU-9</scope>
    <source>
        <tissue evidence="3">Thoracic perisympathetic organs</tissue>
    </source>
</reference>
<dbReference type="GO" id="GO:0005576">
    <property type="term" value="C:extracellular region"/>
    <property type="evidence" value="ECO:0007669"/>
    <property type="project" value="UniProtKB-SubCell"/>
</dbReference>
<dbReference type="GO" id="GO:0007218">
    <property type="term" value="P:neuropeptide signaling pathway"/>
    <property type="evidence" value="ECO:0007669"/>
    <property type="project" value="UniProtKB-KW"/>
</dbReference>
<keyword id="KW-0027">Amidation</keyword>
<keyword id="KW-0903">Direct protein sequencing</keyword>
<keyword id="KW-0527">Neuropeptide</keyword>
<keyword id="KW-0964">Secreted</keyword>
<organism>
    <name type="scientific">Hemilobophasma montaguense</name>
    <name type="common">Gladiator</name>
    <name type="synonym">Heel-walker</name>
    <dbReference type="NCBI Taxonomy" id="253130"/>
    <lineage>
        <taxon>Eukaryota</taxon>
        <taxon>Metazoa</taxon>
        <taxon>Ecdysozoa</taxon>
        <taxon>Arthropoda</taxon>
        <taxon>Hexapoda</taxon>
        <taxon>Insecta</taxon>
        <taxon>Pterygota</taxon>
        <taxon>Neoptera</taxon>
        <taxon>Polyneoptera</taxon>
        <taxon>Mantophasmatodea</taxon>
        <taxon>Austrophasmatidae</taxon>
        <taxon>Hemilobophasma</taxon>
    </lineage>
</organism>
<sequence>ARTDNFVRL</sequence>
<name>FAR8_HEMMO</name>
<protein>
    <recommendedName>
        <fullName evidence="4">Extended FMRFamide-8</fullName>
        <shortName evidence="4">FMRFa-8</shortName>
    </recommendedName>
</protein>
<proteinExistence type="evidence at protein level"/>
<comment type="function">
    <text evidence="1">FMRFamides and FMRFamide-like peptides are neuropeptides.</text>
</comment>
<comment type="subcellular location">
    <subcellularLocation>
        <location evidence="6">Secreted</location>
    </subcellularLocation>
</comment>
<comment type="similarity">
    <text evidence="2">Belongs to the FARP (FMRF amide related peptide) family.</text>
</comment>
<feature type="peptide" id="PRO_0000421531" description="Extended FMRFamide-8" evidence="3">
    <location>
        <begin position="1"/>
        <end position="9"/>
    </location>
</feature>
<feature type="modified residue" description="Leucine amide" evidence="3">
    <location>
        <position position="9"/>
    </location>
</feature>
<feature type="unsure residue" description="L or I" evidence="3">
    <location>
        <position position="9"/>
    </location>
</feature>